<comment type="similarity">
    <text evidence="1">Belongs to the UPF0460 family.</text>
</comment>
<sequence>MMTALSDPRFTRAVSDDGSLATPFMKCLARLVRAHDSYGLWKDKCDAELLANFTVTEEQRRAIPVIGDPEPDVLLRLDLFYAAVGVVIEERSGLLISRTLEISDEGIGRVLFTTRRLVVLSKTLRDVHRFGFNTLGKCAKTGTKLVKDAIKSIETYPDVARA</sequence>
<evidence type="ECO:0000305" key="1"/>
<name>Y4XD_SINFN</name>
<geneLocation type="plasmid">
    <name>sym pNGR234a</name>
</geneLocation>
<feature type="chain" id="PRO_0000200962" description="UPF0460 protein y4xD">
    <location>
        <begin position="1"/>
        <end position="162"/>
    </location>
</feature>
<gene>
    <name type="ordered locus">NGR_a00860</name>
    <name type="ORF">y4xD</name>
</gene>
<proteinExistence type="inferred from homology"/>
<keyword id="KW-0535">Nitrogen fixation</keyword>
<keyword id="KW-0614">Plasmid</keyword>
<keyword id="KW-1185">Reference proteome</keyword>
<accession>P55695</accession>
<dbReference type="EMBL" id="U00090">
    <property type="protein sequence ID" value="AAB91926.1"/>
    <property type="molecule type" value="Genomic_DNA"/>
</dbReference>
<dbReference type="PIR" id="T10831">
    <property type="entry name" value="T10831"/>
</dbReference>
<dbReference type="RefSeq" id="NP_444139.1">
    <property type="nucleotide sequence ID" value="NC_000914.2"/>
</dbReference>
<dbReference type="RefSeq" id="WP_010875127.1">
    <property type="nucleotide sequence ID" value="NC_000914.2"/>
</dbReference>
<dbReference type="SMR" id="P55695"/>
<dbReference type="KEGG" id="rhi:NGR_a00860"/>
<dbReference type="PATRIC" id="fig|394.7.peg.75"/>
<dbReference type="eggNOG" id="ENOG502ZBN7">
    <property type="taxonomic scope" value="Bacteria"/>
</dbReference>
<dbReference type="HOGENOM" id="CLU_141510_0_0_5"/>
<dbReference type="OrthoDB" id="9808545at2"/>
<dbReference type="Proteomes" id="UP000001054">
    <property type="component" value="Plasmid pNGR234a"/>
</dbReference>
<dbReference type="GO" id="GO:0009399">
    <property type="term" value="P:nitrogen fixation"/>
    <property type="evidence" value="ECO:0007669"/>
    <property type="project" value="UniProtKB-KW"/>
</dbReference>
<dbReference type="Gene3D" id="1.10.3100.20">
    <property type="entry name" value="Protein of unknown function DUF269"/>
    <property type="match status" value="1"/>
</dbReference>
<dbReference type="InterPro" id="IPR004952">
    <property type="entry name" value="NifX-assoc_nitrogen_fix"/>
</dbReference>
<dbReference type="NCBIfam" id="TIGR02935">
    <property type="entry name" value="NifX-associated nitrogen fixation protein"/>
    <property type="match status" value="1"/>
</dbReference>
<dbReference type="Pfam" id="PF03270">
    <property type="entry name" value="DUF269"/>
    <property type="match status" value="1"/>
</dbReference>
<dbReference type="PIRSF" id="PIRSF005788">
    <property type="entry name" value="NifK"/>
    <property type="match status" value="1"/>
</dbReference>
<organism>
    <name type="scientific">Sinorhizobium fredii (strain NBRC 101917 / NGR234)</name>
    <dbReference type="NCBI Taxonomy" id="394"/>
    <lineage>
        <taxon>Bacteria</taxon>
        <taxon>Pseudomonadati</taxon>
        <taxon>Pseudomonadota</taxon>
        <taxon>Alphaproteobacteria</taxon>
        <taxon>Hyphomicrobiales</taxon>
        <taxon>Rhizobiaceae</taxon>
        <taxon>Sinorhizobium/Ensifer group</taxon>
        <taxon>Sinorhizobium</taxon>
    </lineage>
</organism>
<protein>
    <recommendedName>
        <fullName>UPF0460 protein y4xD</fullName>
    </recommendedName>
</protein>
<reference key="1">
    <citation type="journal article" date="1997" name="Nature">
        <title>Molecular basis of symbiosis between Rhizobium and legumes.</title>
        <authorList>
            <person name="Freiberg C.A."/>
            <person name="Fellay R."/>
            <person name="Bairoch A."/>
            <person name="Broughton W.J."/>
            <person name="Rosenthal A."/>
            <person name="Perret X."/>
        </authorList>
    </citation>
    <scope>NUCLEOTIDE SEQUENCE [LARGE SCALE GENOMIC DNA]</scope>
    <source>
        <strain>NBRC 101917 / NGR234</strain>
    </source>
</reference>
<reference key="2">
    <citation type="journal article" date="2009" name="Appl. Environ. Microbiol.">
        <title>Rhizobium sp. strain NGR234 possesses a remarkable number of secretion systems.</title>
        <authorList>
            <person name="Schmeisser C."/>
            <person name="Liesegang H."/>
            <person name="Krysciak D."/>
            <person name="Bakkou N."/>
            <person name="Le Quere A."/>
            <person name="Wollherr A."/>
            <person name="Heinemeyer I."/>
            <person name="Morgenstern B."/>
            <person name="Pommerening-Roeser A."/>
            <person name="Flores M."/>
            <person name="Palacios R."/>
            <person name="Brenner S."/>
            <person name="Gottschalk G."/>
            <person name="Schmitz R.A."/>
            <person name="Broughton W.J."/>
            <person name="Perret X."/>
            <person name="Strittmatter A.W."/>
            <person name="Streit W.R."/>
        </authorList>
    </citation>
    <scope>NUCLEOTIDE SEQUENCE [LARGE SCALE GENOMIC DNA]</scope>
    <source>
        <strain>NBRC 101917 / NGR234</strain>
    </source>
</reference>